<accession>A0A1D8PI78</accession>
<protein>
    <recommendedName>
        <fullName>Mitochondrial import inner membrane translocase subunit TIM22</fullName>
    </recommendedName>
</protein>
<reference key="1">
    <citation type="journal article" date="2004" name="Proc. Natl. Acad. Sci. U.S.A.">
        <title>The diploid genome sequence of Candida albicans.</title>
        <authorList>
            <person name="Jones T."/>
            <person name="Federspiel N.A."/>
            <person name="Chibana H."/>
            <person name="Dungan J."/>
            <person name="Kalman S."/>
            <person name="Magee B.B."/>
            <person name="Newport G."/>
            <person name="Thorstenson Y.R."/>
            <person name="Agabian N."/>
            <person name="Magee P.T."/>
            <person name="Davis R.W."/>
            <person name="Scherer S."/>
        </authorList>
    </citation>
    <scope>NUCLEOTIDE SEQUENCE [LARGE SCALE GENOMIC DNA]</scope>
    <source>
        <strain>SC5314 / ATCC MYA-2876</strain>
    </source>
</reference>
<reference key="2">
    <citation type="journal article" date="2007" name="Genome Biol.">
        <title>Assembly of the Candida albicans genome into sixteen supercontigs aligned on the eight chromosomes.</title>
        <authorList>
            <person name="van het Hoog M."/>
            <person name="Rast T.J."/>
            <person name="Martchenko M."/>
            <person name="Grindle S."/>
            <person name="Dignard D."/>
            <person name="Hogues H."/>
            <person name="Cuomo C."/>
            <person name="Berriman M."/>
            <person name="Scherer S."/>
            <person name="Magee B.B."/>
            <person name="Whiteway M."/>
            <person name="Chibana H."/>
            <person name="Nantel A."/>
            <person name="Magee P.T."/>
        </authorList>
    </citation>
    <scope>GENOME REANNOTATION</scope>
    <source>
        <strain>SC5314 / ATCC MYA-2876</strain>
    </source>
</reference>
<reference key="3">
    <citation type="journal article" date="2013" name="Genome Biol.">
        <title>Assembly of a phased diploid Candida albicans genome facilitates allele-specific measurements and provides a simple model for repeat and indel structure.</title>
        <authorList>
            <person name="Muzzey D."/>
            <person name="Schwartz K."/>
            <person name="Weissman J.S."/>
            <person name="Sherlock G."/>
        </authorList>
    </citation>
    <scope>NUCLEOTIDE SEQUENCE [LARGE SCALE GENOMIC DNA]</scope>
    <scope>GENOME REANNOTATION</scope>
    <source>
        <strain>SC5314 / ATCC MYA-2876</strain>
    </source>
</reference>
<reference key="4">
    <citation type="journal article" date="2016" name="Sci. Rep.">
        <title>The presence of disulfide bonds reveals an evolutionarily conserved mechanism involved in mitochondrial protein translocase assembly.</title>
        <authorList>
            <person name="Wrobel L."/>
            <person name="Sokol A.M."/>
            <person name="Chojnacka M."/>
            <person name="Chacinska A."/>
        </authorList>
    </citation>
    <scope>DISULFIDE BOND</scope>
    <scope>MUTAGENESIS OF CYS-118 AND CYS-156</scope>
</reference>
<evidence type="ECO:0000250" key="1">
    <source>
        <dbReference type="UniProtKB" id="Q12328"/>
    </source>
</evidence>
<evidence type="ECO:0000255" key="2"/>
<evidence type="ECO:0000256" key="3">
    <source>
        <dbReference type="SAM" id="MobiDB-lite"/>
    </source>
</evidence>
<evidence type="ECO:0000269" key="4">
    <source>
    </source>
</evidence>
<evidence type="ECO:0000305" key="5"/>
<evidence type="ECO:0000305" key="6">
    <source>
    </source>
</evidence>
<evidence type="ECO:0000312" key="7">
    <source>
        <dbReference type="CGD" id="CAL0000200177"/>
    </source>
</evidence>
<evidence type="ECO:0000312" key="8">
    <source>
        <dbReference type="EMBL" id="AOW27821.1"/>
    </source>
</evidence>
<sequence>MSLWGVYTGPQPPKKPLQEMTQEEQAEEGARQMIGFMNSCPGKTVMAGVSGFALGGFFGLFMASMAYDTPIGTDAVKHISELPFKQQMKLQFTDMAKRSYSSAKNFGYIGMVYSGVECTIESLRAKHDIYNGVSAGCITGAGLAIRAGPQAALVGCAGFAAFSLAIDMYLNSDAAPPPKNDYDI</sequence>
<gene>
    <name evidence="7" type="primary">TIM22</name>
    <name evidence="8" type="ordered locus">CAALFM_C208310WA</name>
    <name evidence="7" type="ORF">orf19.1352</name>
</gene>
<dbReference type="EMBL" id="CP017624">
    <property type="protein sequence ID" value="AOW27821.1"/>
    <property type="molecule type" value="Genomic_DNA"/>
</dbReference>
<dbReference type="RefSeq" id="XP_710236.2">
    <property type="nucleotide sequence ID" value="XM_705144.2"/>
</dbReference>
<dbReference type="SMR" id="A0A1D8PI78"/>
<dbReference type="FunCoup" id="A0A1D8PI78">
    <property type="interactions" value="679"/>
</dbReference>
<dbReference type="STRING" id="237561.A0A1D8PI78"/>
<dbReference type="EnsemblFungi" id="C2_08310W_A-T">
    <property type="protein sequence ID" value="C2_08310W_A-T-p1"/>
    <property type="gene ID" value="C2_08310W_A"/>
</dbReference>
<dbReference type="GeneID" id="3648168"/>
<dbReference type="KEGG" id="cal:CAALFM_C208310WA"/>
<dbReference type="CGD" id="CAL0000200177">
    <property type="gene designation" value="TIM22"/>
</dbReference>
<dbReference type="VEuPathDB" id="FungiDB:C2_08310W_A"/>
<dbReference type="eggNOG" id="KOG3225">
    <property type="taxonomic scope" value="Eukaryota"/>
</dbReference>
<dbReference type="InParanoid" id="A0A1D8PI78"/>
<dbReference type="OMA" id="VNPNMAD"/>
<dbReference type="OrthoDB" id="75343at2759"/>
<dbReference type="Proteomes" id="UP000000559">
    <property type="component" value="Chromosome 2"/>
</dbReference>
<dbReference type="GO" id="GO:0005886">
    <property type="term" value="C:plasma membrane"/>
    <property type="evidence" value="ECO:0000314"/>
    <property type="project" value="CGD"/>
</dbReference>
<dbReference type="GO" id="GO:0042721">
    <property type="term" value="C:TIM22 mitochondrial import inner membrane insertion complex"/>
    <property type="evidence" value="ECO:0000318"/>
    <property type="project" value="GO_Central"/>
</dbReference>
<dbReference type="GO" id="GO:0030943">
    <property type="term" value="F:mitochondrion targeting sequence binding"/>
    <property type="evidence" value="ECO:0000318"/>
    <property type="project" value="GO_Central"/>
</dbReference>
<dbReference type="GO" id="GO:0008320">
    <property type="term" value="F:protein transmembrane transporter activity"/>
    <property type="evidence" value="ECO:0000318"/>
    <property type="project" value="GO_Central"/>
</dbReference>
<dbReference type="GO" id="GO:0005198">
    <property type="term" value="F:structural molecule activity"/>
    <property type="evidence" value="ECO:0007669"/>
    <property type="project" value="EnsemblFungi"/>
</dbReference>
<dbReference type="GO" id="GO:0045039">
    <property type="term" value="P:protein insertion into mitochondrial inner membrane"/>
    <property type="evidence" value="ECO:0000318"/>
    <property type="project" value="GO_Central"/>
</dbReference>
<dbReference type="InterPro" id="IPR039175">
    <property type="entry name" value="TIM22"/>
</dbReference>
<dbReference type="PANTHER" id="PTHR14110">
    <property type="entry name" value="MITOCHONDRIAL IMPORT INNER MEMBRANE TRANSLOCASE SUBUNIT TIM22"/>
    <property type="match status" value="1"/>
</dbReference>
<dbReference type="PANTHER" id="PTHR14110:SF0">
    <property type="entry name" value="MITOCHONDRIAL IMPORT INNER MEMBRANE TRANSLOCASE SUBUNIT TIM22"/>
    <property type="match status" value="1"/>
</dbReference>
<dbReference type="Pfam" id="PF02466">
    <property type="entry name" value="Tim17"/>
    <property type="match status" value="1"/>
</dbReference>
<proteinExistence type="evidence at protein level"/>
<comment type="function">
    <text evidence="1">Essential core component of the TIM22 complex, a complex that mediates the import and insertion of multi-pass transmembrane proteins into the mitochondrial inner membrane. In the TIM22 complex, it constitutes the voltage-activated and signal-gated channel. Forms a twin-pore translocase that uses the membrane potential as external driving force in 2 voltage-dependent steps (By similarity).</text>
</comment>
<comment type="subunit">
    <text evidence="1">Component of the TIM22 complex, whose core is composed of TIM22 and TIM54, associated with the 70 kDa heterohexamer composed of TIM9 and TIM10 (or TIM8 and TIM13).</text>
</comment>
<comment type="subcellular location">
    <subcellularLocation>
        <location evidence="1">Mitochondrion inner membrane</location>
        <topology evidence="2">Multi-pass membrane protein</topology>
    </subcellularLocation>
</comment>
<comment type="similarity">
    <text evidence="5">Belongs to the Tim17/Tim22/Tim23 family.</text>
</comment>
<organism>
    <name type="scientific">Candida albicans (strain SC5314 / ATCC MYA-2876)</name>
    <name type="common">Yeast</name>
    <dbReference type="NCBI Taxonomy" id="237561"/>
    <lineage>
        <taxon>Eukaryota</taxon>
        <taxon>Fungi</taxon>
        <taxon>Dikarya</taxon>
        <taxon>Ascomycota</taxon>
        <taxon>Saccharomycotina</taxon>
        <taxon>Pichiomycetes</taxon>
        <taxon>Debaryomycetaceae</taxon>
        <taxon>Candida/Lodderomyces clade</taxon>
        <taxon>Candida</taxon>
    </lineage>
</organism>
<name>TIM22_CANAL</name>
<feature type="chain" id="PRO_0000442001" description="Mitochondrial import inner membrane translocase subunit TIM22">
    <location>
        <begin position="1"/>
        <end position="184"/>
    </location>
</feature>
<feature type="transmembrane region" description="Helical" evidence="2">
    <location>
        <begin position="45"/>
        <end position="65"/>
    </location>
</feature>
<feature type="transmembrane region" description="Helical" evidence="2">
    <location>
        <begin position="151"/>
        <end position="171"/>
    </location>
</feature>
<feature type="region of interest" description="Disordered" evidence="3">
    <location>
        <begin position="1"/>
        <end position="26"/>
    </location>
</feature>
<feature type="disulfide bond" evidence="6">
    <location>
        <begin position="40"/>
        <end position="118"/>
    </location>
</feature>
<feature type="disulfide bond" evidence="6">
    <location>
        <begin position="137"/>
        <end position="156"/>
    </location>
</feature>
<feature type="mutagenesis site" description="Abolishes disulfide bonds; when associated with S-156." evidence="4">
    <original>C</original>
    <variation>S</variation>
    <location>
        <position position="118"/>
    </location>
</feature>
<feature type="mutagenesis site" description="Abolishes disulfide bonds; when associated with S-118." evidence="4">
    <original>C</original>
    <variation>S</variation>
    <location>
        <position position="156"/>
    </location>
</feature>
<keyword id="KW-1015">Disulfide bond</keyword>
<keyword id="KW-0472">Membrane</keyword>
<keyword id="KW-0496">Mitochondrion</keyword>
<keyword id="KW-0999">Mitochondrion inner membrane</keyword>
<keyword id="KW-0653">Protein transport</keyword>
<keyword id="KW-1185">Reference proteome</keyword>
<keyword id="KW-0811">Translocation</keyword>
<keyword id="KW-0812">Transmembrane</keyword>
<keyword id="KW-1133">Transmembrane helix</keyword>
<keyword id="KW-0813">Transport</keyword>